<protein>
    <recommendedName>
        <fullName evidence="1">Large ribosomal subunit protein bL35</fullName>
    </recommendedName>
    <alternativeName>
        <fullName evidence="3">50S ribosomal protein L35</fullName>
    </alternativeName>
</protein>
<organism>
    <name type="scientific">Xylella fastidiosa (strain Temecula1 / ATCC 700964)</name>
    <dbReference type="NCBI Taxonomy" id="183190"/>
    <lineage>
        <taxon>Bacteria</taxon>
        <taxon>Pseudomonadati</taxon>
        <taxon>Pseudomonadota</taxon>
        <taxon>Gammaproteobacteria</taxon>
        <taxon>Lysobacterales</taxon>
        <taxon>Lysobacteraceae</taxon>
        <taxon>Xylella</taxon>
    </lineage>
</organism>
<proteinExistence type="inferred from homology"/>
<reference key="1">
    <citation type="journal article" date="2003" name="J. Bacteriol.">
        <title>Comparative analyses of the complete genome sequences of Pierce's disease and citrus variegated chlorosis strains of Xylella fastidiosa.</title>
        <authorList>
            <person name="Van Sluys M.A."/>
            <person name="de Oliveira M.C."/>
            <person name="Monteiro-Vitorello C.B."/>
            <person name="Miyaki C.Y."/>
            <person name="Furlan L.R."/>
            <person name="Camargo L.E.A."/>
            <person name="da Silva A.C.R."/>
            <person name="Moon D.H."/>
            <person name="Takita M.A."/>
            <person name="Lemos E.G.M."/>
            <person name="Machado M.A."/>
            <person name="Ferro M.I.T."/>
            <person name="da Silva F.R."/>
            <person name="Goldman M.H.S."/>
            <person name="Goldman G.H."/>
            <person name="Lemos M.V.F."/>
            <person name="El-Dorry H."/>
            <person name="Tsai S.M."/>
            <person name="Carrer H."/>
            <person name="Carraro D.M."/>
            <person name="de Oliveira R.C."/>
            <person name="Nunes L.R."/>
            <person name="Siqueira W.J."/>
            <person name="Coutinho L.L."/>
            <person name="Kimura E.T."/>
            <person name="Ferro E.S."/>
            <person name="Harakava R."/>
            <person name="Kuramae E.E."/>
            <person name="Marino C.L."/>
            <person name="Giglioti E."/>
            <person name="Abreu I.L."/>
            <person name="Alves L.M.C."/>
            <person name="do Amaral A.M."/>
            <person name="Baia G.S."/>
            <person name="Blanco S.R."/>
            <person name="Brito M.S."/>
            <person name="Cannavan F.S."/>
            <person name="Celestino A.V."/>
            <person name="da Cunha A.F."/>
            <person name="Fenille R.C."/>
            <person name="Ferro J.A."/>
            <person name="Formighieri E.F."/>
            <person name="Kishi L.T."/>
            <person name="Leoni S.G."/>
            <person name="Oliveira A.R."/>
            <person name="Rosa V.E. Jr."/>
            <person name="Sassaki F.T."/>
            <person name="Sena J.A.D."/>
            <person name="de Souza A.A."/>
            <person name="Truffi D."/>
            <person name="Tsukumo F."/>
            <person name="Yanai G.M."/>
            <person name="Zaros L.G."/>
            <person name="Civerolo E.L."/>
            <person name="Simpson A.J.G."/>
            <person name="Almeida N.F. Jr."/>
            <person name="Setubal J.C."/>
            <person name="Kitajima J.P."/>
        </authorList>
    </citation>
    <scope>NUCLEOTIDE SEQUENCE [LARGE SCALE GENOMIC DNA]</scope>
    <source>
        <strain>Temecula1 / ATCC 700964</strain>
    </source>
</reference>
<sequence>MPKIKTNRAAAKRFRKTASGKYKAGHANRSHILTKKATKRKRNLRQQNHVRAEDAGRLDRMLPYL</sequence>
<dbReference type="EMBL" id="AE009442">
    <property type="protein sequence ID" value="AAO29744.1"/>
    <property type="molecule type" value="Genomic_DNA"/>
</dbReference>
<dbReference type="RefSeq" id="WP_004090402.1">
    <property type="nucleotide sequence ID" value="NC_004556.1"/>
</dbReference>
<dbReference type="SMR" id="P66285"/>
<dbReference type="GeneID" id="93905774"/>
<dbReference type="KEGG" id="xft:PD_1914"/>
<dbReference type="HOGENOM" id="CLU_169643_4_3_6"/>
<dbReference type="Proteomes" id="UP000002516">
    <property type="component" value="Chromosome"/>
</dbReference>
<dbReference type="GO" id="GO:0022625">
    <property type="term" value="C:cytosolic large ribosomal subunit"/>
    <property type="evidence" value="ECO:0007669"/>
    <property type="project" value="TreeGrafter"/>
</dbReference>
<dbReference type="GO" id="GO:0003735">
    <property type="term" value="F:structural constituent of ribosome"/>
    <property type="evidence" value="ECO:0007669"/>
    <property type="project" value="InterPro"/>
</dbReference>
<dbReference type="GO" id="GO:0006412">
    <property type="term" value="P:translation"/>
    <property type="evidence" value="ECO:0007669"/>
    <property type="project" value="UniProtKB-UniRule"/>
</dbReference>
<dbReference type="FunFam" id="4.10.410.60:FF:000001">
    <property type="entry name" value="50S ribosomal protein L35"/>
    <property type="match status" value="1"/>
</dbReference>
<dbReference type="Gene3D" id="4.10.410.60">
    <property type="match status" value="1"/>
</dbReference>
<dbReference type="HAMAP" id="MF_00514">
    <property type="entry name" value="Ribosomal_bL35"/>
    <property type="match status" value="1"/>
</dbReference>
<dbReference type="InterPro" id="IPR001706">
    <property type="entry name" value="Ribosomal_bL35"/>
</dbReference>
<dbReference type="InterPro" id="IPR021137">
    <property type="entry name" value="Ribosomal_bL35-like"/>
</dbReference>
<dbReference type="InterPro" id="IPR018265">
    <property type="entry name" value="Ribosomal_bL35_CS"/>
</dbReference>
<dbReference type="InterPro" id="IPR037229">
    <property type="entry name" value="Ribosomal_bL35_sf"/>
</dbReference>
<dbReference type="NCBIfam" id="TIGR00001">
    <property type="entry name" value="rpmI_bact"/>
    <property type="match status" value="1"/>
</dbReference>
<dbReference type="PANTHER" id="PTHR33343">
    <property type="entry name" value="54S RIBOSOMAL PROTEIN BL35M"/>
    <property type="match status" value="1"/>
</dbReference>
<dbReference type="PANTHER" id="PTHR33343:SF1">
    <property type="entry name" value="LARGE RIBOSOMAL SUBUNIT PROTEIN BL35M"/>
    <property type="match status" value="1"/>
</dbReference>
<dbReference type="Pfam" id="PF01632">
    <property type="entry name" value="Ribosomal_L35p"/>
    <property type="match status" value="1"/>
</dbReference>
<dbReference type="PRINTS" id="PR00064">
    <property type="entry name" value="RIBOSOMALL35"/>
</dbReference>
<dbReference type="SUPFAM" id="SSF143034">
    <property type="entry name" value="L35p-like"/>
    <property type="match status" value="1"/>
</dbReference>
<dbReference type="PROSITE" id="PS00936">
    <property type="entry name" value="RIBOSOMAL_L35"/>
    <property type="match status" value="1"/>
</dbReference>
<name>RL35_XYLFT</name>
<gene>
    <name evidence="1" type="primary">rpmI</name>
    <name type="ordered locus">PD_1914</name>
</gene>
<accession>P66285</accession>
<accession>Q9PFD9</accession>
<keyword id="KW-1185">Reference proteome</keyword>
<keyword id="KW-0687">Ribonucleoprotein</keyword>
<keyword id="KW-0689">Ribosomal protein</keyword>
<evidence type="ECO:0000255" key="1">
    <source>
        <dbReference type="HAMAP-Rule" id="MF_00514"/>
    </source>
</evidence>
<evidence type="ECO:0000256" key="2">
    <source>
        <dbReference type="SAM" id="MobiDB-lite"/>
    </source>
</evidence>
<evidence type="ECO:0000305" key="3"/>
<feature type="chain" id="PRO_0000177462" description="Large ribosomal subunit protein bL35">
    <location>
        <begin position="1"/>
        <end position="65"/>
    </location>
</feature>
<feature type="region of interest" description="Disordered" evidence="2">
    <location>
        <begin position="1"/>
        <end position="65"/>
    </location>
</feature>
<feature type="compositionally biased region" description="Basic residues" evidence="2">
    <location>
        <begin position="10"/>
        <end position="44"/>
    </location>
</feature>
<feature type="compositionally biased region" description="Basic and acidic residues" evidence="2">
    <location>
        <begin position="50"/>
        <end position="65"/>
    </location>
</feature>
<comment type="similarity">
    <text evidence="1">Belongs to the bacterial ribosomal protein bL35 family.</text>
</comment>